<comment type="function">
    <text>In addition to polymerase activity, this DNA polymerase potentially exhibits 3' to 5' exonuclease activity.</text>
</comment>
<comment type="catalytic activity">
    <reaction>
        <text>DNA(n) + a 2'-deoxyribonucleoside 5'-triphosphate = DNA(n+1) + diphosphate</text>
        <dbReference type="Rhea" id="RHEA:22508"/>
        <dbReference type="Rhea" id="RHEA-COMP:17339"/>
        <dbReference type="Rhea" id="RHEA-COMP:17340"/>
        <dbReference type="ChEBI" id="CHEBI:33019"/>
        <dbReference type="ChEBI" id="CHEBI:61560"/>
        <dbReference type="ChEBI" id="CHEBI:173112"/>
        <dbReference type="EC" id="2.7.7.7"/>
    </reaction>
</comment>
<comment type="similarity">
    <text evidence="1">Belongs to the DNA polymerase type-B family.</text>
</comment>
<protein>
    <recommendedName>
        <fullName>DNA polymerase</fullName>
        <ecNumber>2.7.7.7</ecNumber>
    </recommendedName>
</protein>
<organismHost>
    <name type="scientific">Chlorella</name>
    <dbReference type="NCBI Taxonomy" id="3071"/>
</organismHost>
<accession>P30320</accession>
<organism>
    <name type="scientific">Paramecium bursaria Chlorella virus NY2A</name>
    <name type="common">PBCV-NY2A</name>
    <dbReference type="NCBI Taxonomy" id="46021"/>
    <lineage>
        <taxon>Viruses</taxon>
        <taxon>Varidnaviria</taxon>
        <taxon>Bamfordvirae</taxon>
        <taxon>Nucleocytoviricota</taxon>
        <taxon>Megaviricetes</taxon>
        <taxon>Algavirales</taxon>
        <taxon>Phycodnaviridae</taxon>
        <taxon>Chlorovirus</taxon>
    </lineage>
</organism>
<reference key="1">
    <citation type="journal article" date="1992" name="Virology">
        <title>The DNA polymerase gene from chlorella viruses PBCV-1 and NY-2A contains an intron with nuclear splicing sequences.</title>
        <authorList>
            <person name="Grabherr R."/>
            <person name="Strasser P."/>
            <person name="van Etten J.L."/>
        </authorList>
    </citation>
    <scope>NUCLEOTIDE SEQUENCE [GENOMIC DNA]</scope>
</reference>
<proteinExistence type="inferred from homology"/>
<name>DPOL_PBCVN</name>
<keyword id="KW-0235">DNA replication</keyword>
<keyword id="KW-0238">DNA-binding</keyword>
<keyword id="KW-0239">DNA-directed DNA polymerase</keyword>
<keyword id="KW-0244">Early protein</keyword>
<keyword id="KW-0269">Exonuclease</keyword>
<keyword id="KW-0378">Hydrolase</keyword>
<keyword id="KW-0511">Multifunctional enzyme</keyword>
<keyword id="KW-0540">Nuclease</keyword>
<keyword id="KW-0548">Nucleotidyltransferase</keyword>
<keyword id="KW-0808">Transferase</keyword>
<keyword id="KW-1194">Viral DNA replication</keyword>
<gene>
    <name type="primary">DPO</name>
</gene>
<evidence type="ECO:0000305" key="1"/>
<feature type="chain" id="PRO_0000046538" description="DNA polymerase">
    <location>
        <begin position="1"/>
        <end position="913"/>
    </location>
</feature>
<feature type="region of interest" description="Contains conserved residues essential for 3' -&gt; 5' exonuclease activities">
    <location>
        <begin position="182"/>
        <end position="401"/>
    </location>
</feature>
<sequence length="913" mass="104956">MTELTFFPTDWRSEDVEPDKGEPYFRINIFGKTMDGKTVCVRAKFTPFFLLETPESWSAARTNLFITETAMKYDAIRPSCLPTKRKNMWGYDGGKMRPMVQFVFKTLSQMRKAKYRLKNEYQIYESSVDPIIRIFHLRNINPADWMHVSKAFPVETRISNSDIEVETSFQHLGPSDLKEVPPLIIASWDIETYSKDRKFPLAENPADYCIQIATTFQKYGEPEPYRRVVVCYKQTASVEGVEIISCAEEADVMNTWMTILQDEITDVSIGYNLWQYDLRYIHGRSMMCVDDITGEDNVRLKNLGRLLVGGGEVIERDLSSNAFGQNKFFLLDMPGVMQIDLLQWFRKNRNLESYSLNNVSKLYLGDQKNDLPAMQIFEKFEGGADDRAIIAAYARKDTDLPLKLLKKMAILEDITEMANAVKVPVDYINFRGQQVRAFSCLVGKARQMNYAIPDDKMWTVDGKYEGATVLDAKKGAYFTSIAALDFASLYPSIIRAHNMSPETLVMDKRFENLPGIEYYEIETGLGTFKYPQKNDETGEGQGVVPALLDDLAKFRKQAKKHMAEAKKNDDEFREALYDAQQRSYKIVMNSVYGFLGASRGFIPCVPIAASVTATGRKMIEHTAKRVTELLPGSEVIYGDTDSVMIRMKLPDDKIHDMDEQFKMAKWLAGEITKDFKAPNDLEFEKIYYPYILYSKKRYAAIKFEDPDEKGKVDVKGLALVRRDFSPITREILKESLDTILFKKDTPTAVTETVECIRKVLDNEYPMEKFTMSKTLKTGYKNECQPHLHVSNKIFERTGFPVPSGARVPFVYIEDKKNLDTKQSFRAEDPTFAQENDLIVDRLFYIEHQLMKPICSLFEPLLDDPETEIFGHPLIKGKIDELKSTFKADLRDAKRTKKNIANNQREITSFFKKK</sequence>
<dbReference type="EC" id="2.7.7.7"/>
<dbReference type="EMBL" id="M86837">
    <property type="protein sequence ID" value="AAA88827.1"/>
    <property type="molecule type" value="Genomic_DNA"/>
</dbReference>
<dbReference type="SMR" id="P30320"/>
<dbReference type="GO" id="GO:0008296">
    <property type="term" value="F:3'-5'-DNA exonuclease activity"/>
    <property type="evidence" value="ECO:0007669"/>
    <property type="project" value="TreeGrafter"/>
</dbReference>
<dbReference type="GO" id="GO:0003677">
    <property type="term" value="F:DNA binding"/>
    <property type="evidence" value="ECO:0007669"/>
    <property type="project" value="UniProtKB-KW"/>
</dbReference>
<dbReference type="GO" id="GO:0003887">
    <property type="term" value="F:DNA-directed DNA polymerase activity"/>
    <property type="evidence" value="ECO:0007669"/>
    <property type="project" value="UniProtKB-KW"/>
</dbReference>
<dbReference type="GO" id="GO:0000166">
    <property type="term" value="F:nucleotide binding"/>
    <property type="evidence" value="ECO:0007669"/>
    <property type="project" value="InterPro"/>
</dbReference>
<dbReference type="GO" id="GO:0006287">
    <property type="term" value="P:base-excision repair, gap-filling"/>
    <property type="evidence" value="ECO:0007669"/>
    <property type="project" value="TreeGrafter"/>
</dbReference>
<dbReference type="GO" id="GO:0045004">
    <property type="term" value="P:DNA replication proofreading"/>
    <property type="evidence" value="ECO:0007669"/>
    <property type="project" value="TreeGrafter"/>
</dbReference>
<dbReference type="GO" id="GO:0006297">
    <property type="term" value="P:nucleotide-excision repair, DNA gap filling"/>
    <property type="evidence" value="ECO:0007669"/>
    <property type="project" value="TreeGrafter"/>
</dbReference>
<dbReference type="GO" id="GO:0039693">
    <property type="term" value="P:viral DNA genome replication"/>
    <property type="evidence" value="ECO:0007669"/>
    <property type="project" value="UniProtKB-KW"/>
</dbReference>
<dbReference type="Gene3D" id="1.10.132.60">
    <property type="entry name" value="DNA polymerase family B, C-terminal domain"/>
    <property type="match status" value="1"/>
</dbReference>
<dbReference type="Gene3D" id="3.30.342.10">
    <property type="entry name" value="DNA Polymerase, chain B, domain 1"/>
    <property type="match status" value="1"/>
</dbReference>
<dbReference type="Gene3D" id="1.10.287.690">
    <property type="entry name" value="Helix hairpin bin"/>
    <property type="match status" value="1"/>
</dbReference>
<dbReference type="Gene3D" id="3.90.1600.10">
    <property type="entry name" value="Palm domain of DNA polymerase"/>
    <property type="match status" value="1"/>
</dbReference>
<dbReference type="Gene3D" id="3.30.420.10">
    <property type="entry name" value="Ribonuclease H-like superfamily/Ribonuclease H"/>
    <property type="match status" value="1"/>
</dbReference>
<dbReference type="InterPro" id="IPR006172">
    <property type="entry name" value="DNA-dir_DNA_pol_B"/>
</dbReference>
<dbReference type="InterPro" id="IPR017964">
    <property type="entry name" value="DNA-dir_DNA_pol_B_CS"/>
</dbReference>
<dbReference type="InterPro" id="IPR006133">
    <property type="entry name" value="DNA-dir_DNA_pol_B_exonuc"/>
</dbReference>
<dbReference type="InterPro" id="IPR006134">
    <property type="entry name" value="DNA-dir_DNA_pol_B_multi_dom"/>
</dbReference>
<dbReference type="InterPro" id="IPR043502">
    <property type="entry name" value="DNA/RNA_pol_sf"/>
</dbReference>
<dbReference type="InterPro" id="IPR042087">
    <property type="entry name" value="DNA_pol_B_thumb"/>
</dbReference>
<dbReference type="InterPro" id="IPR023211">
    <property type="entry name" value="DNA_pol_palm_dom_sf"/>
</dbReference>
<dbReference type="InterPro" id="IPR050240">
    <property type="entry name" value="DNA_pol_type-B"/>
</dbReference>
<dbReference type="InterPro" id="IPR012337">
    <property type="entry name" value="RNaseH-like_sf"/>
</dbReference>
<dbReference type="InterPro" id="IPR036397">
    <property type="entry name" value="RNaseH_sf"/>
</dbReference>
<dbReference type="NCBIfam" id="TIGR00592">
    <property type="entry name" value="pol2"/>
    <property type="match status" value="2"/>
</dbReference>
<dbReference type="PANTHER" id="PTHR10322">
    <property type="entry name" value="DNA POLYMERASE CATALYTIC SUBUNIT"/>
    <property type="match status" value="1"/>
</dbReference>
<dbReference type="PANTHER" id="PTHR10322:SF23">
    <property type="entry name" value="DNA POLYMERASE DELTA CATALYTIC SUBUNIT"/>
    <property type="match status" value="1"/>
</dbReference>
<dbReference type="Pfam" id="PF00136">
    <property type="entry name" value="DNA_pol_B"/>
    <property type="match status" value="1"/>
</dbReference>
<dbReference type="Pfam" id="PF03104">
    <property type="entry name" value="DNA_pol_B_exo1"/>
    <property type="match status" value="1"/>
</dbReference>
<dbReference type="PRINTS" id="PR00106">
    <property type="entry name" value="DNAPOLB"/>
</dbReference>
<dbReference type="SMART" id="SM00486">
    <property type="entry name" value="POLBc"/>
    <property type="match status" value="1"/>
</dbReference>
<dbReference type="SUPFAM" id="SSF56672">
    <property type="entry name" value="DNA/RNA polymerases"/>
    <property type="match status" value="1"/>
</dbReference>
<dbReference type="SUPFAM" id="SSF53098">
    <property type="entry name" value="Ribonuclease H-like"/>
    <property type="match status" value="1"/>
</dbReference>
<dbReference type="PROSITE" id="PS00116">
    <property type="entry name" value="DNA_POLYMERASE_B"/>
    <property type="match status" value="1"/>
</dbReference>